<name>EFTS_ALKOO</name>
<accession>A8MHH0</accession>
<dbReference type="EMBL" id="CP000853">
    <property type="protein sequence ID" value="ABW19057.1"/>
    <property type="molecule type" value="Genomic_DNA"/>
</dbReference>
<dbReference type="RefSeq" id="WP_012159369.1">
    <property type="nucleotide sequence ID" value="NC_009922.1"/>
</dbReference>
<dbReference type="SMR" id="A8MHH0"/>
<dbReference type="STRING" id="350688.Clos_1514"/>
<dbReference type="KEGG" id="aoe:Clos_1514"/>
<dbReference type="eggNOG" id="COG0264">
    <property type="taxonomic scope" value="Bacteria"/>
</dbReference>
<dbReference type="HOGENOM" id="CLU_047155_1_1_9"/>
<dbReference type="OrthoDB" id="9808348at2"/>
<dbReference type="Proteomes" id="UP000000269">
    <property type="component" value="Chromosome"/>
</dbReference>
<dbReference type="GO" id="GO:0005737">
    <property type="term" value="C:cytoplasm"/>
    <property type="evidence" value="ECO:0007669"/>
    <property type="project" value="UniProtKB-SubCell"/>
</dbReference>
<dbReference type="GO" id="GO:0003746">
    <property type="term" value="F:translation elongation factor activity"/>
    <property type="evidence" value="ECO:0007669"/>
    <property type="project" value="UniProtKB-UniRule"/>
</dbReference>
<dbReference type="CDD" id="cd14275">
    <property type="entry name" value="UBA_EF-Ts"/>
    <property type="match status" value="1"/>
</dbReference>
<dbReference type="FunFam" id="1.10.286.20:FF:000001">
    <property type="entry name" value="Elongation factor Ts"/>
    <property type="match status" value="1"/>
</dbReference>
<dbReference type="FunFam" id="1.10.8.10:FF:000001">
    <property type="entry name" value="Elongation factor Ts"/>
    <property type="match status" value="1"/>
</dbReference>
<dbReference type="Gene3D" id="1.10.286.20">
    <property type="match status" value="1"/>
</dbReference>
<dbReference type="Gene3D" id="1.10.8.10">
    <property type="entry name" value="DNA helicase RuvA subunit, C-terminal domain"/>
    <property type="match status" value="1"/>
</dbReference>
<dbReference type="Gene3D" id="3.30.479.20">
    <property type="entry name" value="Elongation factor Ts, dimerisation domain"/>
    <property type="match status" value="1"/>
</dbReference>
<dbReference type="HAMAP" id="MF_00050">
    <property type="entry name" value="EF_Ts"/>
    <property type="match status" value="1"/>
</dbReference>
<dbReference type="InterPro" id="IPR036402">
    <property type="entry name" value="EF-Ts_dimer_sf"/>
</dbReference>
<dbReference type="InterPro" id="IPR001816">
    <property type="entry name" value="Transl_elong_EFTs/EF1B"/>
</dbReference>
<dbReference type="InterPro" id="IPR014039">
    <property type="entry name" value="Transl_elong_EFTs/EF1B_dimer"/>
</dbReference>
<dbReference type="InterPro" id="IPR018101">
    <property type="entry name" value="Transl_elong_Ts_CS"/>
</dbReference>
<dbReference type="InterPro" id="IPR009060">
    <property type="entry name" value="UBA-like_sf"/>
</dbReference>
<dbReference type="NCBIfam" id="TIGR00116">
    <property type="entry name" value="tsf"/>
    <property type="match status" value="2"/>
</dbReference>
<dbReference type="PANTHER" id="PTHR11741">
    <property type="entry name" value="ELONGATION FACTOR TS"/>
    <property type="match status" value="1"/>
</dbReference>
<dbReference type="PANTHER" id="PTHR11741:SF0">
    <property type="entry name" value="ELONGATION FACTOR TS, MITOCHONDRIAL"/>
    <property type="match status" value="1"/>
</dbReference>
<dbReference type="Pfam" id="PF00889">
    <property type="entry name" value="EF_TS"/>
    <property type="match status" value="1"/>
</dbReference>
<dbReference type="SUPFAM" id="SSF54713">
    <property type="entry name" value="Elongation factor Ts (EF-Ts), dimerisation domain"/>
    <property type="match status" value="1"/>
</dbReference>
<dbReference type="SUPFAM" id="SSF46934">
    <property type="entry name" value="UBA-like"/>
    <property type="match status" value="1"/>
</dbReference>
<dbReference type="PROSITE" id="PS01126">
    <property type="entry name" value="EF_TS_1"/>
    <property type="match status" value="1"/>
</dbReference>
<dbReference type="PROSITE" id="PS01127">
    <property type="entry name" value="EF_TS_2"/>
    <property type="match status" value="1"/>
</dbReference>
<feature type="chain" id="PRO_1000071119" description="Elongation factor Ts">
    <location>
        <begin position="1"/>
        <end position="216"/>
    </location>
</feature>
<feature type="region of interest" description="Involved in Mg(2+) ion dislocation from EF-Tu" evidence="1">
    <location>
        <begin position="80"/>
        <end position="83"/>
    </location>
</feature>
<protein>
    <recommendedName>
        <fullName evidence="1">Elongation factor Ts</fullName>
        <shortName evidence="1">EF-Ts</shortName>
    </recommendedName>
</protein>
<proteinExistence type="inferred from homology"/>
<reference key="1">
    <citation type="submission" date="2007-10" db="EMBL/GenBank/DDBJ databases">
        <title>Complete genome of Alkaliphilus oremlandii OhILAs.</title>
        <authorList>
            <person name="Copeland A."/>
            <person name="Lucas S."/>
            <person name="Lapidus A."/>
            <person name="Barry K."/>
            <person name="Detter J.C."/>
            <person name="Glavina del Rio T."/>
            <person name="Hammon N."/>
            <person name="Israni S."/>
            <person name="Dalin E."/>
            <person name="Tice H."/>
            <person name="Pitluck S."/>
            <person name="Chain P."/>
            <person name="Malfatti S."/>
            <person name="Shin M."/>
            <person name="Vergez L."/>
            <person name="Schmutz J."/>
            <person name="Larimer F."/>
            <person name="Land M."/>
            <person name="Hauser L."/>
            <person name="Kyrpides N."/>
            <person name="Mikhailova N."/>
            <person name="Stolz J.F."/>
            <person name="Dawson A."/>
            <person name="Fisher E."/>
            <person name="Crable B."/>
            <person name="Perera E."/>
            <person name="Lisak J."/>
            <person name="Ranganathan M."/>
            <person name="Basu P."/>
            <person name="Richardson P."/>
        </authorList>
    </citation>
    <scope>NUCLEOTIDE SEQUENCE [LARGE SCALE GENOMIC DNA]</scope>
    <source>
        <strain>OhILAs</strain>
    </source>
</reference>
<evidence type="ECO:0000255" key="1">
    <source>
        <dbReference type="HAMAP-Rule" id="MF_00050"/>
    </source>
</evidence>
<organism>
    <name type="scientific">Alkaliphilus oremlandii (strain OhILAs)</name>
    <name type="common">Clostridium oremlandii (strain OhILAs)</name>
    <dbReference type="NCBI Taxonomy" id="350688"/>
    <lineage>
        <taxon>Bacteria</taxon>
        <taxon>Bacillati</taxon>
        <taxon>Bacillota</taxon>
        <taxon>Clostridia</taxon>
        <taxon>Peptostreptococcales</taxon>
        <taxon>Natronincolaceae</taxon>
        <taxon>Alkaliphilus</taxon>
    </lineage>
</organism>
<keyword id="KW-0963">Cytoplasm</keyword>
<keyword id="KW-0251">Elongation factor</keyword>
<keyword id="KW-0648">Protein biosynthesis</keyword>
<keyword id="KW-1185">Reference proteome</keyword>
<comment type="function">
    <text evidence="1">Associates with the EF-Tu.GDP complex and induces the exchange of GDP to GTP. It remains bound to the aminoacyl-tRNA.EF-Tu.GTP complex up to the GTP hydrolysis stage on the ribosome.</text>
</comment>
<comment type="subcellular location">
    <subcellularLocation>
        <location evidence="1">Cytoplasm</location>
    </subcellularLocation>
</comment>
<comment type="similarity">
    <text evidence="1">Belongs to the EF-Ts family.</text>
</comment>
<gene>
    <name evidence="1" type="primary">tsf</name>
    <name type="ordered locus">Clos_1514</name>
</gene>
<sequence>MDITASMVKELREKTGAGMMDCKKALTEAEGNMDRAVEVLRERGLAAVAKKSGRIAAEGLVESYIHGGRIGVIVEVNSETDFVAKNQEFKDFVKDVALHIAASNPQYVRREDVDPALVEKEKEILTKQALNEGKPEKIVEKMVEGRIDKFYKEICLLEQPFVKDPDVTVGDLLTEKISKIGENISIRRFTRYEVGEGIEKKEENFAEEVAKQMAQN</sequence>